<sequence length="442" mass="47136">MSNSLNSSKYQPLTTRQGDRIAVVSGIRTPFAKQSTAFSTTPAVDLGKLTVKALMDKTDIDPKLIDQVVFGQVVQMPEAPNIAREIVLGTGMNIGTDAYSVTRACATSFQTTANVVESIMAGTIDIGIAGGADSSSVLPIGVSKKLASTLLALSKTKTVYQKLSLLRTLSLKDIAPVPPAVAEYSTGISMGQTAEQMAKSHGITREEQDALAHRSHTLAAKAWKDGLIQDEVMTAFPEPYTVWLDHDNNIRHDSELASYAKLRPAFDRKYGSVTAANSTPLTDGGAALLLMSEKRAKELGYEPLGYIRSFAFSAIDVHHDMLMGPSYATPMALDKAGISLSDLTLIDMHEAFAAQTLSNVKMFASNKFARECLGRDKAIGEIDMDKFNVLGGSIAYGHPFAATGARMIIQTLRELKRRGGGLGLNTACAAGGLGAAMVLEVE</sequence>
<keyword id="KW-0012">Acyltransferase</keyword>
<keyword id="KW-0963">Cytoplasm</keyword>
<keyword id="KW-0276">Fatty acid metabolism</keyword>
<keyword id="KW-0442">Lipid degradation</keyword>
<keyword id="KW-0443">Lipid metabolism</keyword>
<keyword id="KW-0808">Transferase</keyword>
<dbReference type="EC" id="2.3.1.16" evidence="1"/>
<dbReference type="EMBL" id="CP001139">
    <property type="protein sequence ID" value="ACH67263.1"/>
    <property type="molecule type" value="Genomic_DNA"/>
</dbReference>
<dbReference type="RefSeq" id="WP_012534310.1">
    <property type="nucleotide sequence ID" value="NC_011184.1"/>
</dbReference>
<dbReference type="SMR" id="B5FGB5"/>
<dbReference type="KEGG" id="vfm:VFMJ11_1944"/>
<dbReference type="HOGENOM" id="CLU_031026_2_0_6"/>
<dbReference type="UniPathway" id="UPA00659"/>
<dbReference type="Proteomes" id="UP000001857">
    <property type="component" value="Chromosome I"/>
</dbReference>
<dbReference type="GO" id="GO:0005829">
    <property type="term" value="C:cytosol"/>
    <property type="evidence" value="ECO:0007669"/>
    <property type="project" value="TreeGrafter"/>
</dbReference>
<dbReference type="GO" id="GO:0003988">
    <property type="term" value="F:acetyl-CoA C-acyltransferase activity"/>
    <property type="evidence" value="ECO:0007669"/>
    <property type="project" value="UniProtKB-UniRule"/>
</dbReference>
<dbReference type="GO" id="GO:0006635">
    <property type="term" value="P:fatty acid beta-oxidation"/>
    <property type="evidence" value="ECO:0007669"/>
    <property type="project" value="UniProtKB-UniRule"/>
</dbReference>
<dbReference type="CDD" id="cd00751">
    <property type="entry name" value="thiolase"/>
    <property type="match status" value="1"/>
</dbReference>
<dbReference type="FunFam" id="3.40.47.10:FF:000011">
    <property type="entry name" value="3-ketoacyl-CoA thiolase"/>
    <property type="match status" value="1"/>
</dbReference>
<dbReference type="Gene3D" id="3.40.47.10">
    <property type="match status" value="1"/>
</dbReference>
<dbReference type="HAMAP" id="MF_01618">
    <property type="entry name" value="FadI"/>
    <property type="match status" value="1"/>
</dbReference>
<dbReference type="InterPro" id="IPR012806">
    <property type="entry name" value="Ac-CoA_C-AcTrfase_FadI"/>
</dbReference>
<dbReference type="InterPro" id="IPR002155">
    <property type="entry name" value="Thiolase"/>
</dbReference>
<dbReference type="InterPro" id="IPR016039">
    <property type="entry name" value="Thiolase-like"/>
</dbReference>
<dbReference type="InterPro" id="IPR020617">
    <property type="entry name" value="Thiolase_C"/>
</dbReference>
<dbReference type="InterPro" id="IPR020613">
    <property type="entry name" value="Thiolase_CS"/>
</dbReference>
<dbReference type="InterPro" id="IPR020616">
    <property type="entry name" value="Thiolase_N"/>
</dbReference>
<dbReference type="NCBIfam" id="TIGR01930">
    <property type="entry name" value="AcCoA-C-Actrans"/>
    <property type="match status" value="1"/>
</dbReference>
<dbReference type="NCBIfam" id="TIGR02446">
    <property type="entry name" value="FadI"/>
    <property type="match status" value="1"/>
</dbReference>
<dbReference type="NCBIfam" id="NF006516">
    <property type="entry name" value="PRK08963.1"/>
    <property type="match status" value="1"/>
</dbReference>
<dbReference type="PANTHER" id="PTHR18919:SF107">
    <property type="entry name" value="ACETYL-COA ACETYLTRANSFERASE, CYTOSOLIC"/>
    <property type="match status" value="1"/>
</dbReference>
<dbReference type="PANTHER" id="PTHR18919">
    <property type="entry name" value="ACETYL-COA C-ACYLTRANSFERASE"/>
    <property type="match status" value="1"/>
</dbReference>
<dbReference type="Pfam" id="PF02803">
    <property type="entry name" value="Thiolase_C"/>
    <property type="match status" value="1"/>
</dbReference>
<dbReference type="Pfam" id="PF00108">
    <property type="entry name" value="Thiolase_N"/>
    <property type="match status" value="1"/>
</dbReference>
<dbReference type="PIRSF" id="PIRSF000429">
    <property type="entry name" value="Ac-CoA_Ac_transf"/>
    <property type="match status" value="1"/>
</dbReference>
<dbReference type="SUPFAM" id="SSF53901">
    <property type="entry name" value="Thiolase-like"/>
    <property type="match status" value="2"/>
</dbReference>
<dbReference type="PROSITE" id="PS00737">
    <property type="entry name" value="THIOLASE_2"/>
    <property type="match status" value="1"/>
</dbReference>
<gene>
    <name evidence="1" type="primary">fadI</name>
    <name type="ordered locus">VFMJ11_1944</name>
</gene>
<name>FADI_ALIFM</name>
<comment type="function">
    <text evidence="1">Catalyzes the final step of fatty acid oxidation in which acetyl-CoA is released and the CoA ester of a fatty acid two carbons shorter is formed.</text>
</comment>
<comment type="catalytic activity">
    <reaction evidence="1">
        <text>an acyl-CoA + acetyl-CoA = a 3-oxoacyl-CoA + CoA</text>
        <dbReference type="Rhea" id="RHEA:21564"/>
        <dbReference type="ChEBI" id="CHEBI:57287"/>
        <dbReference type="ChEBI" id="CHEBI:57288"/>
        <dbReference type="ChEBI" id="CHEBI:58342"/>
        <dbReference type="ChEBI" id="CHEBI:90726"/>
        <dbReference type="EC" id="2.3.1.16"/>
    </reaction>
</comment>
<comment type="pathway">
    <text evidence="1">Lipid metabolism; fatty acid beta-oxidation.</text>
</comment>
<comment type="subunit">
    <text evidence="1">Heterotetramer of two alpha chains (FadJ) and two beta chains (FadI).</text>
</comment>
<comment type="subcellular location">
    <subcellularLocation>
        <location evidence="1">Cytoplasm</location>
    </subcellularLocation>
</comment>
<comment type="similarity">
    <text evidence="1">Belongs to the thiolase-like superfamily. Thiolase family.</text>
</comment>
<evidence type="ECO:0000255" key="1">
    <source>
        <dbReference type="HAMAP-Rule" id="MF_01618"/>
    </source>
</evidence>
<feature type="chain" id="PRO_1000185983" description="3-ketoacyl-CoA thiolase">
    <location>
        <begin position="1"/>
        <end position="442"/>
    </location>
</feature>
<feature type="active site" description="Acyl-thioester intermediate" evidence="1">
    <location>
        <position position="105"/>
    </location>
</feature>
<feature type="active site" description="Proton acceptor" evidence="1">
    <location>
        <position position="398"/>
    </location>
</feature>
<feature type="active site" description="Proton acceptor" evidence="1">
    <location>
        <position position="428"/>
    </location>
</feature>
<accession>B5FGB5</accession>
<organism>
    <name type="scientific">Aliivibrio fischeri (strain MJ11)</name>
    <name type="common">Vibrio fischeri</name>
    <dbReference type="NCBI Taxonomy" id="388396"/>
    <lineage>
        <taxon>Bacteria</taxon>
        <taxon>Pseudomonadati</taxon>
        <taxon>Pseudomonadota</taxon>
        <taxon>Gammaproteobacteria</taxon>
        <taxon>Vibrionales</taxon>
        <taxon>Vibrionaceae</taxon>
        <taxon>Aliivibrio</taxon>
    </lineage>
</organism>
<proteinExistence type="inferred from homology"/>
<reference key="1">
    <citation type="submission" date="2008-08" db="EMBL/GenBank/DDBJ databases">
        <title>Complete sequence of Vibrio fischeri strain MJ11.</title>
        <authorList>
            <person name="Mandel M.J."/>
            <person name="Stabb E.V."/>
            <person name="Ruby E.G."/>
            <person name="Ferriera S."/>
            <person name="Johnson J."/>
            <person name="Kravitz S."/>
            <person name="Beeson K."/>
            <person name="Sutton G."/>
            <person name="Rogers Y.-H."/>
            <person name="Friedman R."/>
            <person name="Frazier M."/>
            <person name="Venter J.C."/>
        </authorList>
    </citation>
    <scope>NUCLEOTIDE SEQUENCE [LARGE SCALE GENOMIC DNA]</scope>
    <source>
        <strain>MJ11</strain>
    </source>
</reference>
<protein>
    <recommendedName>
        <fullName evidence="1">3-ketoacyl-CoA thiolase</fullName>
        <ecNumber evidence="1">2.3.1.16</ecNumber>
    </recommendedName>
    <alternativeName>
        <fullName evidence="1">ACSs</fullName>
    </alternativeName>
    <alternativeName>
        <fullName evidence="1">Acetyl-CoA acyltransferase</fullName>
    </alternativeName>
    <alternativeName>
        <fullName evidence="1">Acyl-CoA ligase</fullName>
    </alternativeName>
    <alternativeName>
        <fullName evidence="1">Beta-ketothiolase</fullName>
    </alternativeName>
    <alternativeName>
        <fullName evidence="1">Fatty acid oxidation complex subunit beta</fullName>
    </alternativeName>
</protein>